<gene>
    <name evidence="4" type="primary">TIF3</name>
    <name evidence="6" type="ORF">CNAG_06906</name>
</gene>
<feature type="chain" id="PRO_0000451161" description="Probable eukaryotic translation initiation factor 4H">
    <location>
        <begin position="1"/>
        <end position="511"/>
    </location>
</feature>
<feature type="domain" description="RRM" evidence="1">
    <location>
        <begin position="86"/>
        <end position="162"/>
    </location>
</feature>
<feature type="region of interest" description="Disordered" evidence="2">
    <location>
        <begin position="25"/>
        <end position="63"/>
    </location>
</feature>
<feature type="region of interest" description="Disordered" evidence="2">
    <location>
        <begin position="154"/>
        <end position="511"/>
    </location>
</feature>
<feature type="compositionally biased region" description="Basic and acidic residues" evidence="2">
    <location>
        <begin position="39"/>
        <end position="51"/>
    </location>
</feature>
<feature type="compositionally biased region" description="Polar residues" evidence="2">
    <location>
        <begin position="179"/>
        <end position="196"/>
    </location>
</feature>
<feature type="compositionally biased region" description="Basic and acidic residues" evidence="2">
    <location>
        <begin position="230"/>
        <end position="247"/>
    </location>
</feature>
<feature type="compositionally biased region" description="Basic and acidic residues" evidence="2">
    <location>
        <begin position="261"/>
        <end position="270"/>
    </location>
</feature>
<feature type="compositionally biased region" description="Polar residues" evidence="2">
    <location>
        <begin position="285"/>
        <end position="318"/>
    </location>
</feature>
<feature type="compositionally biased region" description="Low complexity" evidence="2">
    <location>
        <begin position="331"/>
        <end position="349"/>
    </location>
</feature>
<feature type="compositionally biased region" description="Basic and acidic residues" evidence="2">
    <location>
        <begin position="360"/>
        <end position="388"/>
    </location>
</feature>
<feature type="compositionally biased region" description="Basic and acidic residues" evidence="2">
    <location>
        <begin position="394"/>
        <end position="419"/>
    </location>
</feature>
<feature type="compositionally biased region" description="Low complexity" evidence="2">
    <location>
        <begin position="420"/>
        <end position="434"/>
    </location>
</feature>
<feature type="compositionally biased region" description="Basic and acidic residues" evidence="2">
    <location>
        <begin position="438"/>
        <end position="448"/>
    </location>
</feature>
<feature type="compositionally biased region" description="Polar residues" evidence="2">
    <location>
        <begin position="451"/>
        <end position="467"/>
    </location>
</feature>
<feature type="compositionally biased region" description="Basic and acidic residues" evidence="2">
    <location>
        <begin position="502"/>
        <end position="511"/>
    </location>
</feature>
<feature type="modified residue" description="Phosphoserine" evidence="3">
    <location>
        <position position="334"/>
    </location>
</feature>
<proteinExistence type="evidence at protein level"/>
<evidence type="ECO:0000255" key="1">
    <source>
        <dbReference type="PROSITE-ProRule" id="PRU00176"/>
    </source>
</evidence>
<evidence type="ECO:0000256" key="2">
    <source>
        <dbReference type="SAM" id="MobiDB-lite"/>
    </source>
</evidence>
<evidence type="ECO:0000269" key="3">
    <source>
    </source>
</evidence>
<evidence type="ECO:0000303" key="4">
    <source>
    </source>
</evidence>
<evidence type="ECO:0000305" key="5"/>
<evidence type="ECO:0000312" key="6">
    <source>
        <dbReference type="EMBL" id="AFR94162.2"/>
    </source>
</evidence>
<evidence type="ECO:0000312" key="7">
    <source>
        <dbReference type="Proteomes" id="UP000010091"/>
    </source>
</evidence>
<comment type="function">
    <text evidence="5">Probable translation initiation factor.</text>
</comment>
<comment type="subcellular location">
    <subcellularLocation>
        <location evidence="3">Cytoplasm</location>
        <location evidence="3">P-body</location>
    </subcellularLocation>
    <text evidence="3">Localizes to P-bodies during response to heat stress.</text>
</comment>
<comment type="disruption phenotype">
    <text evidence="3">Sensitive to dithiothreitol-induced ER stress (PubMed:27611567). Abnormal sexual reproduction; decreases pheromone MFalpha1 expression and abolishes hyphal elongation (PubMed:27611567).</text>
</comment>
<name>TIF3_CRYNH</name>
<organism evidence="7">
    <name type="scientific">Cryptococcus neoformans var. grubii serotype A (strain H99 / ATCC 208821 / CBS 10515 / FGSC 9487)</name>
    <name type="common">Filobasidiella neoformans var. grubii</name>
    <dbReference type="NCBI Taxonomy" id="235443"/>
    <lineage>
        <taxon>Eukaryota</taxon>
        <taxon>Fungi</taxon>
        <taxon>Dikarya</taxon>
        <taxon>Basidiomycota</taxon>
        <taxon>Agaricomycotina</taxon>
        <taxon>Tremellomycetes</taxon>
        <taxon>Tremellales</taxon>
        <taxon>Cryptococcaceae</taxon>
        <taxon>Cryptococcus</taxon>
        <taxon>Cryptococcus neoformans species complex</taxon>
    </lineage>
</organism>
<dbReference type="EMBL" id="CP003822">
    <property type="protein sequence ID" value="AFR94162.2"/>
    <property type="molecule type" value="Genomic_DNA"/>
</dbReference>
<dbReference type="RefSeq" id="XP_012048004.1">
    <property type="nucleotide sequence ID" value="XM_012192614.1"/>
</dbReference>
<dbReference type="SMR" id="J9VI89"/>
<dbReference type="iPTMnet" id="J9VI89"/>
<dbReference type="GeneID" id="23890060"/>
<dbReference type="KEGG" id="cng:CNAG_06906"/>
<dbReference type="VEuPathDB" id="FungiDB:CNAG_06906"/>
<dbReference type="HOGENOM" id="CLU_615667_0_0_1"/>
<dbReference type="OrthoDB" id="5804at5206"/>
<dbReference type="Proteomes" id="UP000010091">
    <property type="component" value="Chromosome 3"/>
</dbReference>
<dbReference type="GO" id="GO:0005730">
    <property type="term" value="C:nucleolus"/>
    <property type="evidence" value="ECO:0007669"/>
    <property type="project" value="TreeGrafter"/>
</dbReference>
<dbReference type="GO" id="GO:0000932">
    <property type="term" value="C:P-body"/>
    <property type="evidence" value="ECO:0000314"/>
    <property type="project" value="UniProtKB"/>
</dbReference>
<dbReference type="GO" id="GO:0003723">
    <property type="term" value="F:RNA binding"/>
    <property type="evidence" value="ECO:0007669"/>
    <property type="project" value="UniProtKB-KW"/>
</dbReference>
<dbReference type="GO" id="GO:0003743">
    <property type="term" value="F:translation initiation factor activity"/>
    <property type="evidence" value="ECO:0007669"/>
    <property type="project" value="UniProtKB-KW"/>
</dbReference>
<dbReference type="FunFam" id="3.30.70.330:FF:000414">
    <property type="entry name" value="Eukaryotic translation initiation factor 4H"/>
    <property type="match status" value="1"/>
</dbReference>
<dbReference type="Gene3D" id="3.30.70.330">
    <property type="match status" value="1"/>
</dbReference>
<dbReference type="InterPro" id="IPR012677">
    <property type="entry name" value="Nucleotide-bd_a/b_plait_sf"/>
</dbReference>
<dbReference type="InterPro" id="IPR035979">
    <property type="entry name" value="RBD_domain_sf"/>
</dbReference>
<dbReference type="InterPro" id="IPR000504">
    <property type="entry name" value="RRM_dom"/>
</dbReference>
<dbReference type="PANTHER" id="PTHR23236">
    <property type="entry name" value="EUKARYOTIC TRANSLATION INITIATION FACTOR 4B/4H"/>
    <property type="match status" value="1"/>
</dbReference>
<dbReference type="PANTHER" id="PTHR23236:SF11">
    <property type="entry name" value="EUKARYOTIC TRANSLATION INITIATION FACTOR 4H"/>
    <property type="match status" value="1"/>
</dbReference>
<dbReference type="Pfam" id="PF00076">
    <property type="entry name" value="RRM_1"/>
    <property type="match status" value="1"/>
</dbReference>
<dbReference type="SMART" id="SM00360">
    <property type="entry name" value="RRM"/>
    <property type="match status" value="1"/>
</dbReference>
<dbReference type="SUPFAM" id="SSF54928">
    <property type="entry name" value="RNA-binding domain, RBD"/>
    <property type="match status" value="1"/>
</dbReference>
<dbReference type="PROSITE" id="PS50102">
    <property type="entry name" value="RRM"/>
    <property type="match status" value="1"/>
</dbReference>
<reference evidence="7" key="1">
    <citation type="journal article" date="2014" name="PLoS Genet.">
        <title>Analysis of the genome and transcriptome of Cryptococcus neoformans var. grubii reveals complex RNA expression and microevolution leading to virulence attenuation.</title>
        <authorList>
            <person name="Janbon G."/>
            <person name="Ormerod K.L."/>
            <person name="Paulet D."/>
            <person name="Byrnes E.J. III"/>
            <person name="Yadav V."/>
            <person name="Chatterjee G."/>
            <person name="Mullapudi N."/>
            <person name="Hon C.-C."/>
            <person name="Billmyre R.B."/>
            <person name="Brunel F."/>
            <person name="Bahn Y.-S."/>
            <person name="Chen W."/>
            <person name="Chen Y."/>
            <person name="Chow E.W.L."/>
            <person name="Coppee J.-Y."/>
            <person name="Floyd-Averette A."/>
            <person name="Gaillardin C."/>
            <person name="Gerik K.J."/>
            <person name="Goldberg J."/>
            <person name="Gonzalez-Hilarion S."/>
            <person name="Gujja S."/>
            <person name="Hamlin J.L."/>
            <person name="Hsueh Y.-P."/>
            <person name="Ianiri G."/>
            <person name="Jones S."/>
            <person name="Kodira C.D."/>
            <person name="Kozubowski L."/>
            <person name="Lam W."/>
            <person name="Marra M."/>
            <person name="Mesner L.D."/>
            <person name="Mieczkowski P.A."/>
            <person name="Moyrand F."/>
            <person name="Nielsen K."/>
            <person name="Proux C."/>
            <person name="Rossignol T."/>
            <person name="Schein J.E."/>
            <person name="Sun S."/>
            <person name="Wollschlaeger C."/>
            <person name="Wood I.A."/>
            <person name="Zeng Q."/>
            <person name="Neuveglise C."/>
            <person name="Newlon C.S."/>
            <person name="Perfect J.R."/>
            <person name="Lodge J.K."/>
            <person name="Idnurm A."/>
            <person name="Stajich J.E."/>
            <person name="Kronstad J.W."/>
            <person name="Sanyal K."/>
            <person name="Heitman J."/>
            <person name="Fraser J.A."/>
            <person name="Cuomo C.A."/>
            <person name="Dietrich F.S."/>
        </authorList>
    </citation>
    <scope>NUCLEOTIDE SEQUENCE [LARGE SCALE GENOMIC DNA]</scope>
    <source>
        <strain>H99 / ATCC 208821 / CBS 10515 / FGSC 9487</strain>
    </source>
</reference>
<reference evidence="5" key="2">
    <citation type="journal article" date="2016" name="PLoS Pathog.">
        <title>Calcineurin Targets Involved in Stress Survival and Fungal Virulence.</title>
        <authorList>
            <person name="Park H.S."/>
            <person name="Chow E.W."/>
            <person name="Fu C."/>
            <person name="Soderblom E.J."/>
            <person name="Moseley M.A."/>
            <person name="Heitman J."/>
            <person name="Cardenas M.E."/>
        </authorList>
    </citation>
    <scope>IDENTIFICATION BY MASS SPECTROMETRY</scope>
    <scope>SUBCELLULAR LOCATION</scope>
    <scope>DISRUPTION PHENOTYPE</scope>
    <scope>PHOSPHORYLATION AT SER-334</scope>
</reference>
<protein>
    <recommendedName>
        <fullName evidence="5">Probable eukaryotic translation initiation factor 4H</fullName>
    </recommendedName>
</protein>
<accession>J9VI89</accession>
<keyword id="KW-0963">Cytoplasm</keyword>
<keyword id="KW-0396">Initiation factor</keyword>
<keyword id="KW-0597">Phosphoprotein</keyword>
<keyword id="KW-0648">Protein biosynthesis</keyword>
<keyword id="KW-0694">RNA-binding</keyword>
<sequence>MAPKKKGQKMALHEFFEEAATSGTSWADDDFDLPTAPAAREESGSGLKRGDPGYFESLPDRGSRQATFAGAPVQREELPLPTVPPFTAFIGNLSFEPDVEDEVRAFFNDLDPVSVRIVKDPQGKPKGFGYAEFKTQDGLKQALDRSMSQLQGRTIRVNVAEAPSTSRHPPSAAEEASQWRRSTPLASRESSSQPSRRTGGPSEPAADLDWSVARGAKFTPSAPAAPLSGVRRDSSGPGHTREPRDPGVSDTADQWRSNKPLAEKVDRDVPPHQAGVAPPIVSPSLADTEQTWSRGTKLRTPTTTSRQSSADSTPSSGAPQERRKLNLKPRTAGSPSATANATPAAPASGIFGAAKPIDSAAREKAAEEKLAQREGERRKAREEAEKQKAAAGDKPVEGEKLGWREEKLRSIKAAQDKVAGKPTTAPATTTNTGAGRKGSADRAKKDEQGFEQVQPSRKSSQTGATSENKPKKDYSTRPQFSFAAAAGAIRNDLVEDKDEEEVTKGVEEVKI</sequence>